<sequence>MDLAAAAEPGAGSQHLEVRDEVAEKCQKLFLDFLEEFQNSDGEIKYLQLAEELIRPERNTLVVSFVDLEQFNQQLSTTIQEEFYRVYPYLCRALKTFVKDRKEIPLAKDFYVAFQDLPTRHKIRELTSSRIGLLTRISGQVVRTHPVHPELVSGTFLCLDCQTVIKDVEQQFKYTQPNICRNPVCANRRRFLLDTNKSRFVDFQKVRIQETQAELPRGSIPRSLEVILRAEAVESAQAGDKCDFTGTLIVVPDVSKLSTPGARAETDSRVSGVDGYETEGVRGLRALGVRDLSYRLVFLACCVAPTNPRFGGKELRDEEQTAESIKNQMTVKEWEKVFEMSQDKNLYHNLCTSLFPTIHGNDEVKRGVLLMLFGGVPKTTGEGTSLRGDINVCIVGDPSTAKSQFLKHVEEFSPRAVYTSGKASIAAGLTAAVVRDEESHEFVIEAGALMLADNGVCCIDEFDKMDVRDQVAIHEAMEQQTISITKAGVKATLNARTSILAAANPISGHYDRSKSLKQNINLSAPIMSRFDLFFILVDECNEVTDYAIARRIVDLHSRIEDSIDRVYSLDEIRRYLLFARQFKPKISKESEDFIVEQYKRLRQRDGSGVTKSSWRITVRQLESMIRLSEAMARMHCCDEVQPKHVKEAFRLLNKSIIRVETPDVNLDQEEDAQMEVDEGPDGINGHADSPAPASGINGHSEDMNQDSVPKASLRLGFSEYCRISNLIVLHLRKMEEEEDESALKRSELVNWYLKEIESEIDSEEELINKKRIIEKVIYRLTHYDHVLIELTQAGLKGSTEGSESYEEDPYLVVNPNYLLED</sequence>
<feature type="chain" id="PRO_0000239660" description="DNA replication licensing factor MCM6">
    <location>
        <begin position="1"/>
        <end position="821"/>
    </location>
</feature>
<feature type="domain" description="MCM">
    <location>
        <begin position="346"/>
        <end position="553"/>
    </location>
</feature>
<feature type="region of interest" description="Disordered" evidence="3">
    <location>
        <begin position="676"/>
        <end position="706"/>
    </location>
</feature>
<feature type="short sequence motif" description="Arginine finger">
    <location>
        <begin position="528"/>
        <end position="531"/>
    </location>
</feature>
<feature type="binding site" evidence="2">
    <location>
        <position position="359"/>
    </location>
    <ligand>
        <name>ATP</name>
        <dbReference type="ChEBI" id="CHEBI:30616"/>
        <note>ligand shared with MCM4</note>
    </ligand>
</feature>
<feature type="binding site" evidence="2">
    <location>
        <position position="399"/>
    </location>
    <ligand>
        <name>ATP</name>
        <dbReference type="ChEBI" id="CHEBI:30616"/>
        <note>ligand shared with MCM4</note>
    </ligand>
</feature>
<feature type="binding site" evidence="2">
    <location>
        <position position="400"/>
    </location>
    <ligand>
        <name>ATP</name>
        <dbReference type="ChEBI" id="CHEBI:30616"/>
        <note>ligand shared with MCM4</note>
    </ligand>
</feature>
<feature type="binding site" evidence="2">
    <location>
        <position position="401"/>
    </location>
    <ligand>
        <name>ATP</name>
        <dbReference type="ChEBI" id="CHEBI:30616"/>
        <note>ligand shared with MCM4</note>
    </ligand>
</feature>
<feature type="binding site" evidence="2">
    <location>
        <position position="402"/>
    </location>
    <ligand>
        <name>ATP</name>
        <dbReference type="ChEBI" id="CHEBI:30616"/>
        <note>ligand shared with MCM4</note>
    </ligand>
</feature>
<feature type="binding site" evidence="2">
    <location>
        <position position="403"/>
    </location>
    <ligand>
        <name>ATP</name>
        <dbReference type="ChEBI" id="CHEBI:30616"/>
        <note>ligand shared with MCM4</note>
    </ligand>
</feature>
<feature type="binding site" evidence="2">
    <location>
        <position position="504"/>
    </location>
    <ligand>
        <name>ATP</name>
        <dbReference type="ChEBI" id="CHEBI:30616"/>
        <note>ligand shared with MCM4</note>
    </ligand>
</feature>
<feature type="binding site" evidence="2">
    <location>
        <position position="619"/>
    </location>
    <ligand>
        <name>ADP</name>
        <dbReference type="ChEBI" id="CHEBI:456216"/>
        <note>ligand shared with MCM2</note>
    </ligand>
</feature>
<feature type="binding site" evidence="2">
    <location>
        <position position="622"/>
    </location>
    <ligand>
        <name>ADP</name>
        <dbReference type="ChEBI" id="CHEBI:456216"/>
        <note>ligand shared with MCM2</note>
    </ligand>
</feature>
<feature type="modified residue" description="N-acetylmethionine" evidence="2">
    <location>
        <position position="1"/>
    </location>
</feature>
<feature type="modified residue" description="Phosphoserine" evidence="2">
    <location>
        <position position="13"/>
    </location>
</feature>
<feature type="modified residue" description="Phosphoserine" evidence="2">
    <location>
        <position position="219"/>
    </location>
</feature>
<feature type="modified residue" description="Phosphoserine" evidence="2">
    <location>
        <position position="271"/>
    </location>
</feature>
<feature type="modified residue" description="Phosphothreonine" evidence="2">
    <location>
        <position position="278"/>
    </location>
</feature>
<feature type="modified residue" description="N6-acetyllysine" evidence="1">
    <location>
        <position position="643"/>
    </location>
</feature>
<feature type="modified residue" description="Phosphoserine" evidence="1">
    <location>
        <position position="689"/>
    </location>
</feature>
<feature type="modified residue" description="Phosphoserine" evidence="2">
    <location>
        <position position="762"/>
    </location>
</feature>
<feature type="modified residue" description="Phosphothreonine" evidence="2">
    <location>
        <position position="791"/>
    </location>
</feature>
<evidence type="ECO:0000250" key="1">
    <source>
        <dbReference type="UniProtKB" id="P97311"/>
    </source>
</evidence>
<evidence type="ECO:0000250" key="2">
    <source>
        <dbReference type="UniProtKB" id="Q14566"/>
    </source>
</evidence>
<evidence type="ECO:0000256" key="3">
    <source>
        <dbReference type="SAM" id="MobiDB-lite"/>
    </source>
</evidence>
<evidence type="ECO:0000305" key="4"/>
<accession>Q2KIZ8</accession>
<organism>
    <name type="scientific">Bos taurus</name>
    <name type="common">Bovine</name>
    <dbReference type="NCBI Taxonomy" id="9913"/>
    <lineage>
        <taxon>Eukaryota</taxon>
        <taxon>Metazoa</taxon>
        <taxon>Chordata</taxon>
        <taxon>Craniata</taxon>
        <taxon>Vertebrata</taxon>
        <taxon>Euteleostomi</taxon>
        <taxon>Mammalia</taxon>
        <taxon>Eutheria</taxon>
        <taxon>Laurasiatheria</taxon>
        <taxon>Artiodactyla</taxon>
        <taxon>Ruminantia</taxon>
        <taxon>Pecora</taxon>
        <taxon>Bovidae</taxon>
        <taxon>Bovinae</taxon>
        <taxon>Bos</taxon>
    </lineage>
</organism>
<comment type="function">
    <text evidence="2">Acts as a component of the MCM2-7 complex (MCM complex) which is the replicative helicase essential for 'once per cell cycle' DNA replication initiation and elongation in eukaryotic cells. Core component of CDC45-MCM-GINS (CMG) helicase, the molecular machine that unwinds template DNA during replication, and around which the replisome is built. The active ATPase sites in the MCM2-7 ring are formed through the interaction surfaces of two neighboring subunits such that a critical structure of a conserved arginine finger motif is provided in trans relative to the ATP-binding site of the Walker A box of the adjacent subunit. The six ATPase active sites, however, are likely to contribute differentially to the complex helicase activity.</text>
</comment>
<comment type="catalytic activity">
    <reaction evidence="2">
        <text>ATP + H2O = ADP + phosphate + H(+)</text>
        <dbReference type="Rhea" id="RHEA:13065"/>
        <dbReference type="ChEBI" id="CHEBI:15377"/>
        <dbReference type="ChEBI" id="CHEBI:15378"/>
        <dbReference type="ChEBI" id="CHEBI:30616"/>
        <dbReference type="ChEBI" id="CHEBI:43474"/>
        <dbReference type="ChEBI" id="CHEBI:456216"/>
        <dbReference type="EC" id="3.6.4.12"/>
    </reaction>
    <physiologicalReaction direction="left-to-right" evidence="2">
        <dbReference type="Rhea" id="RHEA:13066"/>
    </physiologicalReaction>
</comment>
<comment type="subunit">
    <text evidence="2">Component of the MCM2-7 complex. The complex forms a toroidal hexameric ring with the proposed subunit order MCM2-MCM6-MCM4-MCM7-MCM3-MCM5. Component of the CMG helicase complex, a hexameric ring of related MCM2-7 subunits stabilized by CDC45 and the tetrameric GINS complex. May interact with MCM10. Interacts with TIPIN. Interacts with CDT1. Interacts with MCMBP. Interacts with DDI2.</text>
</comment>
<comment type="subcellular location">
    <subcellularLocation>
        <location evidence="2">Nucleus</location>
    </subcellularLocation>
    <subcellularLocation>
        <location evidence="2">Chromosome</location>
    </subcellularLocation>
    <text evidence="2">Binds to chromatin during G1 and detaches from it during S phase.</text>
</comment>
<comment type="PTM">
    <text evidence="2">O-glycosylated (O-GlcNAcylated), in a cell cycle-dependent manner.</text>
</comment>
<comment type="miscellaneous">
    <text evidence="1">Early fractionation of eukaryotic MCM proteins yielded a variety of dimeric, trimeric and tetrameric complexes with unclear biological significance. Specifically a MCM467 subcomplex is shown to have in vitro helicase activity which is inhibited by the MCM2 subunit. The MCM2-7 hexamer is the proposed physiological active complex.</text>
</comment>
<comment type="similarity">
    <text evidence="4">Belongs to the MCM family.</text>
</comment>
<protein>
    <recommendedName>
        <fullName>DNA replication licensing factor MCM6</fullName>
        <ecNumber evidence="1">3.6.4.12</ecNumber>
    </recommendedName>
</protein>
<name>MCM6_BOVIN</name>
<keyword id="KW-0007">Acetylation</keyword>
<keyword id="KW-0067">ATP-binding</keyword>
<keyword id="KW-0131">Cell cycle</keyword>
<keyword id="KW-0158">Chromosome</keyword>
<keyword id="KW-0235">DNA replication</keyword>
<keyword id="KW-0238">DNA-binding</keyword>
<keyword id="KW-0325">Glycoprotein</keyword>
<keyword id="KW-0347">Helicase</keyword>
<keyword id="KW-0378">Hydrolase</keyword>
<keyword id="KW-0547">Nucleotide-binding</keyword>
<keyword id="KW-0539">Nucleus</keyword>
<keyword id="KW-0597">Phosphoprotein</keyword>
<keyword id="KW-1185">Reference proteome</keyword>
<proteinExistence type="evidence at transcript level"/>
<gene>
    <name type="primary">MCM6</name>
</gene>
<reference key="1">
    <citation type="submission" date="2006-01" db="EMBL/GenBank/DDBJ databases">
        <authorList>
            <consortium name="NIH - Mammalian Gene Collection (MGC) project"/>
        </authorList>
    </citation>
    <scope>NUCLEOTIDE SEQUENCE [LARGE SCALE MRNA]</scope>
    <source>
        <strain>Crossbred X Angus</strain>
        <tissue>Liver</tissue>
    </source>
</reference>
<dbReference type="EC" id="3.6.4.12" evidence="1"/>
<dbReference type="EMBL" id="BC112448">
    <property type="protein sequence ID" value="AAI12449.1"/>
    <property type="molecule type" value="mRNA"/>
</dbReference>
<dbReference type="RefSeq" id="NP_001039699.1">
    <property type="nucleotide sequence ID" value="NM_001046234.1"/>
</dbReference>
<dbReference type="BMRB" id="Q2KIZ8"/>
<dbReference type="SMR" id="Q2KIZ8"/>
<dbReference type="FunCoup" id="Q2KIZ8">
    <property type="interactions" value="1791"/>
</dbReference>
<dbReference type="STRING" id="9913.ENSBTAP00000048625"/>
<dbReference type="PaxDb" id="9913-ENSBTAP00000048625"/>
<dbReference type="GeneID" id="517812"/>
<dbReference type="KEGG" id="bta:517812"/>
<dbReference type="CTD" id="4175"/>
<dbReference type="eggNOG" id="KOG0480">
    <property type="taxonomic scope" value="Eukaryota"/>
</dbReference>
<dbReference type="InParanoid" id="Q2KIZ8"/>
<dbReference type="OrthoDB" id="1744952at2759"/>
<dbReference type="CD-CODE" id="D7FE2080">
    <property type="entry name" value="Nucleolus"/>
</dbReference>
<dbReference type="Proteomes" id="UP000009136">
    <property type="component" value="Unplaced"/>
</dbReference>
<dbReference type="GO" id="GO:0071162">
    <property type="term" value="C:CMG complex"/>
    <property type="evidence" value="ECO:0000250"/>
    <property type="project" value="UniProtKB"/>
</dbReference>
<dbReference type="GO" id="GO:0042555">
    <property type="term" value="C:MCM complex"/>
    <property type="evidence" value="ECO:0000250"/>
    <property type="project" value="UniProtKB"/>
</dbReference>
<dbReference type="GO" id="GO:0005634">
    <property type="term" value="C:nucleus"/>
    <property type="evidence" value="ECO:0000318"/>
    <property type="project" value="GO_Central"/>
</dbReference>
<dbReference type="GO" id="GO:0005524">
    <property type="term" value="F:ATP binding"/>
    <property type="evidence" value="ECO:0007669"/>
    <property type="project" value="UniProtKB-KW"/>
</dbReference>
<dbReference type="GO" id="GO:0016887">
    <property type="term" value="F:ATP hydrolysis activity"/>
    <property type="evidence" value="ECO:0007669"/>
    <property type="project" value="RHEA"/>
</dbReference>
<dbReference type="GO" id="GO:0003678">
    <property type="term" value="F:DNA helicase activity"/>
    <property type="evidence" value="ECO:0007669"/>
    <property type="project" value="InterPro"/>
</dbReference>
<dbReference type="GO" id="GO:0003697">
    <property type="term" value="F:single-stranded DNA binding"/>
    <property type="evidence" value="ECO:0000318"/>
    <property type="project" value="GO_Central"/>
</dbReference>
<dbReference type="GO" id="GO:0006260">
    <property type="term" value="P:DNA replication"/>
    <property type="evidence" value="ECO:0000318"/>
    <property type="project" value="GO_Central"/>
</dbReference>
<dbReference type="GO" id="GO:0006270">
    <property type="term" value="P:DNA replication initiation"/>
    <property type="evidence" value="ECO:0007669"/>
    <property type="project" value="InterPro"/>
</dbReference>
<dbReference type="GO" id="GO:0000727">
    <property type="term" value="P:double-strand break repair via break-induced replication"/>
    <property type="evidence" value="ECO:0000318"/>
    <property type="project" value="GO_Central"/>
</dbReference>
<dbReference type="GO" id="GO:1902969">
    <property type="term" value="P:mitotic DNA replication"/>
    <property type="evidence" value="ECO:0000318"/>
    <property type="project" value="GO_Central"/>
</dbReference>
<dbReference type="CDD" id="cd17757">
    <property type="entry name" value="MCM6"/>
    <property type="match status" value="1"/>
</dbReference>
<dbReference type="FunFam" id="1.20.58.870:FF:000001">
    <property type="entry name" value="DNA helicase"/>
    <property type="match status" value="1"/>
</dbReference>
<dbReference type="FunFam" id="2.20.28.10:FF:000003">
    <property type="entry name" value="DNA helicase"/>
    <property type="match status" value="1"/>
</dbReference>
<dbReference type="FunFam" id="2.40.50.140:FF:000091">
    <property type="entry name" value="DNA helicase"/>
    <property type="match status" value="1"/>
</dbReference>
<dbReference type="FunFam" id="3.30.1640.10:FF:000004">
    <property type="entry name" value="DNA helicase"/>
    <property type="match status" value="1"/>
</dbReference>
<dbReference type="FunFam" id="3.40.50.300:FF:000115">
    <property type="entry name" value="DNA helicase"/>
    <property type="match status" value="1"/>
</dbReference>
<dbReference type="Gene3D" id="1.20.58.870">
    <property type="match status" value="1"/>
</dbReference>
<dbReference type="Gene3D" id="2.20.28.10">
    <property type="match status" value="1"/>
</dbReference>
<dbReference type="Gene3D" id="3.30.1640.10">
    <property type="entry name" value="mini-chromosome maintenance (MCM) complex, chain A, domain 1"/>
    <property type="match status" value="1"/>
</dbReference>
<dbReference type="Gene3D" id="2.40.50.140">
    <property type="entry name" value="Nucleic acid-binding proteins"/>
    <property type="match status" value="1"/>
</dbReference>
<dbReference type="Gene3D" id="3.40.50.300">
    <property type="entry name" value="P-loop containing nucleotide triphosphate hydrolases"/>
    <property type="match status" value="1"/>
</dbReference>
<dbReference type="InterPro" id="IPR031327">
    <property type="entry name" value="MCM"/>
</dbReference>
<dbReference type="InterPro" id="IPR008049">
    <property type="entry name" value="MCM6"/>
</dbReference>
<dbReference type="InterPro" id="IPR041024">
    <property type="entry name" value="Mcm6_C"/>
</dbReference>
<dbReference type="InterPro" id="IPR018525">
    <property type="entry name" value="MCM_CS"/>
</dbReference>
<dbReference type="InterPro" id="IPR001208">
    <property type="entry name" value="MCM_dom"/>
</dbReference>
<dbReference type="InterPro" id="IPR041562">
    <property type="entry name" value="MCM_lid"/>
</dbReference>
<dbReference type="InterPro" id="IPR027925">
    <property type="entry name" value="MCM_N"/>
</dbReference>
<dbReference type="InterPro" id="IPR033762">
    <property type="entry name" value="MCM_OB"/>
</dbReference>
<dbReference type="InterPro" id="IPR012340">
    <property type="entry name" value="NA-bd_OB-fold"/>
</dbReference>
<dbReference type="InterPro" id="IPR027417">
    <property type="entry name" value="P-loop_NTPase"/>
</dbReference>
<dbReference type="PANTHER" id="PTHR11630">
    <property type="entry name" value="DNA REPLICATION LICENSING FACTOR MCM FAMILY MEMBER"/>
    <property type="match status" value="1"/>
</dbReference>
<dbReference type="PANTHER" id="PTHR11630:SF73">
    <property type="entry name" value="DNA REPLICATION LICENSING FACTOR MCM6"/>
    <property type="match status" value="1"/>
</dbReference>
<dbReference type="Pfam" id="PF00493">
    <property type="entry name" value="MCM"/>
    <property type="match status" value="1"/>
</dbReference>
<dbReference type="Pfam" id="PF18263">
    <property type="entry name" value="MCM6_C"/>
    <property type="match status" value="1"/>
</dbReference>
<dbReference type="Pfam" id="PF17855">
    <property type="entry name" value="MCM_lid"/>
    <property type="match status" value="1"/>
</dbReference>
<dbReference type="Pfam" id="PF14551">
    <property type="entry name" value="MCM_N"/>
    <property type="match status" value="1"/>
</dbReference>
<dbReference type="Pfam" id="PF17207">
    <property type="entry name" value="MCM_OB"/>
    <property type="match status" value="1"/>
</dbReference>
<dbReference type="PRINTS" id="PR01657">
    <property type="entry name" value="MCMFAMILY"/>
</dbReference>
<dbReference type="PRINTS" id="PR01662">
    <property type="entry name" value="MCMPROTEIN6"/>
</dbReference>
<dbReference type="SMART" id="SM00350">
    <property type="entry name" value="MCM"/>
    <property type="match status" value="1"/>
</dbReference>
<dbReference type="SUPFAM" id="SSF50249">
    <property type="entry name" value="Nucleic acid-binding proteins"/>
    <property type="match status" value="1"/>
</dbReference>
<dbReference type="SUPFAM" id="SSF52540">
    <property type="entry name" value="P-loop containing nucleoside triphosphate hydrolases"/>
    <property type="match status" value="1"/>
</dbReference>
<dbReference type="PROSITE" id="PS00847">
    <property type="entry name" value="MCM_1"/>
    <property type="match status" value="1"/>
</dbReference>
<dbReference type="PROSITE" id="PS50051">
    <property type="entry name" value="MCM_2"/>
    <property type="match status" value="1"/>
</dbReference>